<evidence type="ECO:0000255" key="1">
    <source>
        <dbReference type="HAMAP-Rule" id="MF_00366"/>
    </source>
</evidence>
<keyword id="KW-0240">DNA-directed RNA polymerase</keyword>
<keyword id="KW-0548">Nucleotidyltransferase</keyword>
<keyword id="KW-1185">Reference proteome</keyword>
<keyword id="KW-0804">Transcription</keyword>
<keyword id="KW-0808">Transferase</keyword>
<comment type="function">
    <text evidence="1">Promotes RNA polymerase assembly. Latches the N- and C-terminal regions of the beta' subunit thereby facilitating its interaction with the beta and alpha subunits.</text>
</comment>
<comment type="catalytic activity">
    <reaction evidence="1">
        <text>RNA(n) + a ribonucleoside 5'-triphosphate = RNA(n+1) + diphosphate</text>
        <dbReference type="Rhea" id="RHEA:21248"/>
        <dbReference type="Rhea" id="RHEA-COMP:14527"/>
        <dbReference type="Rhea" id="RHEA-COMP:17342"/>
        <dbReference type="ChEBI" id="CHEBI:33019"/>
        <dbReference type="ChEBI" id="CHEBI:61557"/>
        <dbReference type="ChEBI" id="CHEBI:140395"/>
        <dbReference type="EC" id="2.7.7.6"/>
    </reaction>
</comment>
<comment type="subunit">
    <text evidence="1">The RNAP catalytic core consists of 2 alpha, 1 beta, 1 beta' and 1 omega subunit. When a sigma factor is associated with the core the holoenzyme is formed, which can initiate transcription.</text>
</comment>
<comment type="similarity">
    <text evidence="1">Belongs to the RNA polymerase subunit omega family.</text>
</comment>
<reference key="1">
    <citation type="journal article" date="2006" name="Proc. Natl. Acad. Sci. U.S.A.">
        <title>Comparative genomics of the lactic acid bacteria.</title>
        <authorList>
            <person name="Makarova K.S."/>
            <person name="Slesarev A."/>
            <person name="Wolf Y.I."/>
            <person name="Sorokin A."/>
            <person name="Mirkin B."/>
            <person name="Koonin E.V."/>
            <person name="Pavlov A."/>
            <person name="Pavlova N."/>
            <person name="Karamychev V."/>
            <person name="Polouchine N."/>
            <person name="Shakhova V."/>
            <person name="Grigoriev I."/>
            <person name="Lou Y."/>
            <person name="Rohksar D."/>
            <person name="Lucas S."/>
            <person name="Huang K."/>
            <person name="Goodstein D.M."/>
            <person name="Hawkins T."/>
            <person name="Plengvidhya V."/>
            <person name="Welker D."/>
            <person name="Hughes J."/>
            <person name="Goh Y."/>
            <person name="Benson A."/>
            <person name="Baldwin K."/>
            <person name="Lee J.-H."/>
            <person name="Diaz-Muniz I."/>
            <person name="Dosti B."/>
            <person name="Smeianov V."/>
            <person name="Wechter W."/>
            <person name="Barabote R."/>
            <person name="Lorca G."/>
            <person name="Altermann E."/>
            <person name="Barrangou R."/>
            <person name="Ganesan B."/>
            <person name="Xie Y."/>
            <person name="Rawsthorne H."/>
            <person name="Tamir D."/>
            <person name="Parker C."/>
            <person name="Breidt F."/>
            <person name="Broadbent J.R."/>
            <person name="Hutkins R."/>
            <person name="O'Sullivan D."/>
            <person name="Steele J."/>
            <person name="Unlu G."/>
            <person name="Saier M.H. Jr."/>
            <person name="Klaenhammer T."/>
            <person name="Richardson P."/>
            <person name="Kozyavkin S."/>
            <person name="Weimer B.C."/>
            <person name="Mills D.A."/>
        </authorList>
    </citation>
    <scope>NUCLEOTIDE SEQUENCE [LARGE SCALE GENOMIC DNA]</scope>
    <source>
        <strain>ATCC 334 / BCRC 17002 / CCUG 31169 / CIP 107868 / KCTC 3260 / NRRL B-441</strain>
    </source>
</reference>
<name>RPOZ_LACP3</name>
<sequence length="82" mass="9205">MIIYPSIDKLLEKVPSRYSLAVLAAKRAHELESGDLKMLSDYKSDKSVGKALEEIAAGDVIIDPKSKMLERDAEKLDRKDQE</sequence>
<protein>
    <recommendedName>
        <fullName evidence="1">DNA-directed RNA polymerase subunit omega</fullName>
        <shortName evidence="1">RNAP omega subunit</shortName>
        <ecNumber evidence="1">2.7.7.6</ecNumber>
    </recommendedName>
    <alternativeName>
        <fullName evidence="1">RNA polymerase omega subunit</fullName>
    </alternativeName>
    <alternativeName>
        <fullName evidence="1">Transcriptase subunit omega</fullName>
    </alternativeName>
</protein>
<organism>
    <name type="scientific">Lacticaseibacillus paracasei (strain ATCC 334 / BCRC 17002 / CCUG 31169 / CIP 107868 / KCTC 3260 / NRRL B-441)</name>
    <name type="common">Lactobacillus paracasei</name>
    <dbReference type="NCBI Taxonomy" id="321967"/>
    <lineage>
        <taxon>Bacteria</taxon>
        <taxon>Bacillati</taxon>
        <taxon>Bacillota</taxon>
        <taxon>Bacilli</taxon>
        <taxon>Lactobacillales</taxon>
        <taxon>Lactobacillaceae</taxon>
        <taxon>Lacticaseibacillus</taxon>
    </lineage>
</organism>
<feature type="chain" id="PRO_1000121236" description="DNA-directed RNA polymerase subunit omega">
    <location>
        <begin position="1"/>
        <end position="82"/>
    </location>
</feature>
<accession>Q038H0</accession>
<dbReference type="EC" id="2.7.7.6" evidence="1"/>
<dbReference type="EMBL" id="CP000423">
    <property type="protein sequence ID" value="ABJ70402.1"/>
    <property type="molecule type" value="Genomic_DNA"/>
</dbReference>
<dbReference type="RefSeq" id="WP_003564692.1">
    <property type="nucleotide sequence ID" value="NC_008526.1"/>
</dbReference>
<dbReference type="RefSeq" id="YP_806844.1">
    <property type="nucleotide sequence ID" value="NC_008526.1"/>
</dbReference>
<dbReference type="SMR" id="Q038H0"/>
<dbReference type="STRING" id="321967.LSEI_1628"/>
<dbReference type="PaxDb" id="321967-LSEI_1628"/>
<dbReference type="GeneID" id="57090333"/>
<dbReference type="KEGG" id="lca:LSEI_1628"/>
<dbReference type="PATRIC" id="fig|321967.11.peg.1609"/>
<dbReference type="HOGENOM" id="CLU_125406_0_0_9"/>
<dbReference type="Proteomes" id="UP000001651">
    <property type="component" value="Chromosome"/>
</dbReference>
<dbReference type="GO" id="GO:0000428">
    <property type="term" value="C:DNA-directed RNA polymerase complex"/>
    <property type="evidence" value="ECO:0007669"/>
    <property type="project" value="UniProtKB-KW"/>
</dbReference>
<dbReference type="GO" id="GO:0003677">
    <property type="term" value="F:DNA binding"/>
    <property type="evidence" value="ECO:0007669"/>
    <property type="project" value="UniProtKB-UniRule"/>
</dbReference>
<dbReference type="GO" id="GO:0003899">
    <property type="term" value="F:DNA-directed RNA polymerase activity"/>
    <property type="evidence" value="ECO:0007669"/>
    <property type="project" value="UniProtKB-UniRule"/>
</dbReference>
<dbReference type="GO" id="GO:0006351">
    <property type="term" value="P:DNA-templated transcription"/>
    <property type="evidence" value="ECO:0007669"/>
    <property type="project" value="UniProtKB-UniRule"/>
</dbReference>
<dbReference type="Gene3D" id="3.90.940.10">
    <property type="match status" value="1"/>
</dbReference>
<dbReference type="HAMAP" id="MF_00366">
    <property type="entry name" value="RNApol_bact_RpoZ"/>
    <property type="match status" value="1"/>
</dbReference>
<dbReference type="InterPro" id="IPR003716">
    <property type="entry name" value="DNA-dir_RNA_pol_omega"/>
</dbReference>
<dbReference type="InterPro" id="IPR006110">
    <property type="entry name" value="Pol_omega/Rpo6/RPB6"/>
</dbReference>
<dbReference type="InterPro" id="IPR036161">
    <property type="entry name" value="RPB6/omega-like_sf"/>
</dbReference>
<dbReference type="NCBIfam" id="TIGR00690">
    <property type="entry name" value="rpoZ"/>
    <property type="match status" value="1"/>
</dbReference>
<dbReference type="PANTHER" id="PTHR34476">
    <property type="entry name" value="DNA-DIRECTED RNA POLYMERASE SUBUNIT OMEGA"/>
    <property type="match status" value="1"/>
</dbReference>
<dbReference type="PANTHER" id="PTHR34476:SF1">
    <property type="entry name" value="DNA-DIRECTED RNA POLYMERASE SUBUNIT OMEGA"/>
    <property type="match status" value="1"/>
</dbReference>
<dbReference type="Pfam" id="PF01192">
    <property type="entry name" value="RNA_pol_Rpb6"/>
    <property type="match status" value="1"/>
</dbReference>
<dbReference type="SMART" id="SM01409">
    <property type="entry name" value="RNA_pol_Rpb6"/>
    <property type="match status" value="1"/>
</dbReference>
<dbReference type="SUPFAM" id="SSF63562">
    <property type="entry name" value="RPB6/omega subunit-like"/>
    <property type="match status" value="1"/>
</dbReference>
<proteinExistence type="inferred from homology"/>
<gene>
    <name evidence="1" type="primary">rpoZ</name>
    <name type="ordered locus">LSEI_1628</name>
</gene>